<keyword id="KW-1185">Reference proteome</keyword>
<gene>
    <name type="ordered locus">SERP0781</name>
</gene>
<protein>
    <recommendedName>
        <fullName evidence="1">Peptide deformylase-like</fullName>
    </recommendedName>
    <alternativeName>
        <fullName evidence="1">Polypeptide deformylase-like</fullName>
    </alternativeName>
</protein>
<accession>Q5HPX6</accession>
<evidence type="ECO:0000255" key="1">
    <source>
        <dbReference type="HAMAP-Rule" id="MF_00163"/>
    </source>
</evidence>
<name>DEFL_STAEQ</name>
<feature type="chain" id="PRO_0000082903" description="Peptide deformylase-like">
    <location>
        <begin position="1"/>
        <end position="162"/>
    </location>
</feature>
<reference key="1">
    <citation type="journal article" date="2005" name="J. Bacteriol.">
        <title>Insights on evolution of virulence and resistance from the complete genome analysis of an early methicillin-resistant Staphylococcus aureus strain and a biofilm-producing methicillin-resistant Staphylococcus epidermidis strain.</title>
        <authorList>
            <person name="Gill S.R."/>
            <person name="Fouts D.E."/>
            <person name="Archer G.L."/>
            <person name="Mongodin E.F."/>
            <person name="DeBoy R.T."/>
            <person name="Ravel J."/>
            <person name="Paulsen I.T."/>
            <person name="Kolonay J.F."/>
            <person name="Brinkac L.M."/>
            <person name="Beanan M.J."/>
            <person name="Dodson R.J."/>
            <person name="Daugherty S.C."/>
            <person name="Madupu R."/>
            <person name="Angiuoli S.V."/>
            <person name="Durkin A.S."/>
            <person name="Haft D.H."/>
            <person name="Vamathevan J.J."/>
            <person name="Khouri H."/>
            <person name="Utterback T.R."/>
            <person name="Lee C."/>
            <person name="Dimitrov G."/>
            <person name="Jiang L."/>
            <person name="Qin H."/>
            <person name="Weidman J."/>
            <person name="Tran K."/>
            <person name="Kang K.H."/>
            <person name="Hance I.R."/>
            <person name="Nelson K.E."/>
            <person name="Fraser C.M."/>
        </authorList>
    </citation>
    <scope>NUCLEOTIDE SEQUENCE [LARGE SCALE GENOMIC DNA]</scope>
    <source>
        <strain>ATCC 35984 / DSM 28319 / BCRC 17069 / CCUG 31568 / BM 3577 / RP62A</strain>
    </source>
</reference>
<comment type="similarity">
    <text evidence="1">Belongs to the polypeptide deformylase family.</text>
</comment>
<organism>
    <name type="scientific">Staphylococcus epidermidis (strain ATCC 35984 / DSM 28319 / BCRC 17069 / CCUG 31568 / BM 3577 / RP62A)</name>
    <dbReference type="NCBI Taxonomy" id="176279"/>
    <lineage>
        <taxon>Bacteria</taxon>
        <taxon>Bacillati</taxon>
        <taxon>Bacillota</taxon>
        <taxon>Bacilli</taxon>
        <taxon>Bacillales</taxon>
        <taxon>Staphylococcaceae</taxon>
        <taxon>Staphylococcus</taxon>
    </lineage>
</organism>
<sequence length="162" mass="18229">MTVKKLVKSTHPILNKTIQPVSTYDQKLKVLLEDLEDTLYHEEAAAISAPQIGVDQSVALIDMEQEGLLQLINPVVKSQSQETVSDLEGSISLPHIYGEVKRSKMITVQSYDINGNAVELTAYDDIARMILHMIDHLNGIQFTKRAHHILNETEVEAYFDNE</sequence>
<dbReference type="EMBL" id="CP000029">
    <property type="protein sequence ID" value="AAW54199.1"/>
    <property type="molecule type" value="Genomic_DNA"/>
</dbReference>
<dbReference type="RefSeq" id="WP_001830064.1">
    <property type="nucleotide sequence ID" value="NC_002976.3"/>
</dbReference>
<dbReference type="SMR" id="Q5HPX6"/>
<dbReference type="STRING" id="176279.SERP0781"/>
<dbReference type="KEGG" id="ser:SERP0781"/>
<dbReference type="eggNOG" id="COG0242">
    <property type="taxonomic scope" value="Bacteria"/>
</dbReference>
<dbReference type="HOGENOM" id="CLU_061901_4_1_9"/>
<dbReference type="BRENDA" id="3.5.1.88">
    <property type="organism ID" value="5875"/>
</dbReference>
<dbReference type="Proteomes" id="UP000000531">
    <property type="component" value="Chromosome"/>
</dbReference>
<dbReference type="GO" id="GO:0042586">
    <property type="term" value="F:peptide deformylase activity"/>
    <property type="evidence" value="ECO:0007669"/>
    <property type="project" value="UniProtKB-UniRule"/>
</dbReference>
<dbReference type="GO" id="GO:0043686">
    <property type="term" value="P:co-translational protein modification"/>
    <property type="evidence" value="ECO:0007669"/>
    <property type="project" value="TreeGrafter"/>
</dbReference>
<dbReference type="GO" id="GO:0006412">
    <property type="term" value="P:translation"/>
    <property type="evidence" value="ECO:0007669"/>
    <property type="project" value="UniProtKB-UniRule"/>
</dbReference>
<dbReference type="CDD" id="cd00487">
    <property type="entry name" value="Pep_deformylase"/>
    <property type="match status" value="1"/>
</dbReference>
<dbReference type="Gene3D" id="3.90.45.10">
    <property type="entry name" value="Peptide deformylase"/>
    <property type="match status" value="1"/>
</dbReference>
<dbReference type="HAMAP" id="MF_00163">
    <property type="entry name" value="Pep_deformylase"/>
    <property type="match status" value="1"/>
</dbReference>
<dbReference type="InterPro" id="IPR023635">
    <property type="entry name" value="Peptide_deformylase"/>
</dbReference>
<dbReference type="InterPro" id="IPR036821">
    <property type="entry name" value="Peptide_deformylase_sf"/>
</dbReference>
<dbReference type="NCBIfam" id="NF011189">
    <property type="entry name" value="PRK14595.1"/>
    <property type="match status" value="1"/>
</dbReference>
<dbReference type="PANTHER" id="PTHR10458">
    <property type="entry name" value="PEPTIDE DEFORMYLASE"/>
    <property type="match status" value="1"/>
</dbReference>
<dbReference type="PANTHER" id="PTHR10458:SF22">
    <property type="entry name" value="PEPTIDE DEFORMYLASE"/>
    <property type="match status" value="1"/>
</dbReference>
<dbReference type="Pfam" id="PF01327">
    <property type="entry name" value="Pep_deformylase"/>
    <property type="match status" value="1"/>
</dbReference>
<dbReference type="PIRSF" id="PIRSF004749">
    <property type="entry name" value="Pep_def"/>
    <property type="match status" value="1"/>
</dbReference>
<dbReference type="PRINTS" id="PR01576">
    <property type="entry name" value="PDEFORMYLASE"/>
</dbReference>
<dbReference type="SUPFAM" id="SSF56420">
    <property type="entry name" value="Peptide deformylase"/>
    <property type="match status" value="1"/>
</dbReference>
<proteinExistence type="inferred from homology"/>